<reference key="1">
    <citation type="journal article" date="2001" name="Biochem. Biophys. Res. Commun.">
        <title>Isolate KAV: a new genotype of the TT-virus family.</title>
        <authorList>
            <person name="Heller F."/>
            <person name="Zachoval R."/>
            <person name="Koelzer A."/>
            <person name="Nitschko H."/>
            <person name="Froesner G.G."/>
        </authorList>
    </citation>
    <scope>NUCLEOTIDE SEQUENCE [GENOMIC DNA]</scope>
</reference>
<reference key="2">
    <citation type="journal article" date="2007" name="Rev. Med. Virol.">
        <title>Torque teno virus (TTV): current status.</title>
        <authorList>
            <person name="Hino S."/>
            <person name="Miyata H."/>
        </authorList>
    </citation>
    <scope>REVIEW</scope>
</reference>
<feature type="chain" id="PRO_0000315336" description="Probable protein VP2">
    <location>
        <begin position="1"/>
        <end position="265"/>
    </location>
</feature>
<feature type="region of interest" description="Disordered" evidence="2">
    <location>
        <begin position="44"/>
        <end position="110"/>
    </location>
</feature>
<feature type="region of interest" description="Disordered" evidence="2">
    <location>
        <begin position="152"/>
        <end position="171"/>
    </location>
</feature>
<feature type="region of interest" description="Disordered" evidence="2">
    <location>
        <begin position="194"/>
        <end position="265"/>
    </location>
</feature>
<feature type="compositionally biased region" description="Pro residues" evidence="2">
    <location>
        <begin position="48"/>
        <end position="60"/>
    </location>
</feature>
<feature type="compositionally biased region" description="Low complexity" evidence="2">
    <location>
        <begin position="152"/>
        <end position="168"/>
    </location>
</feature>
<feature type="compositionally biased region" description="Basic residues" evidence="2">
    <location>
        <begin position="221"/>
        <end position="242"/>
    </location>
</feature>
<feature type="compositionally biased region" description="Low complexity" evidence="2">
    <location>
        <begin position="243"/>
        <end position="265"/>
    </location>
</feature>
<organism>
    <name type="scientific">Torque teno virus (isolate Human/Germany/KAV/2001)</name>
    <name type="common">TTV</name>
    <dbReference type="NCBI Taxonomy" id="687345"/>
    <lineage>
        <taxon>Viruses</taxon>
        <taxon>Viruses incertae sedis</taxon>
        <taxon>Anelloviridae</taxon>
        <taxon>Alphatorquevirus</taxon>
        <taxon>Alphatorquevirus homin6</taxon>
    </lineage>
</organism>
<accession>Q914N2</accession>
<accession>Q914N1</accession>
<evidence type="ECO:0000250" key="1"/>
<evidence type="ECO:0000256" key="2">
    <source>
        <dbReference type="SAM" id="MobiDB-lite"/>
    </source>
</evidence>
<gene>
    <name type="ORF">ORF2/3</name>
</gene>
<dbReference type="EMBL" id="AF435014">
    <property type="protein sequence ID" value="AAL28135.1"/>
    <property type="status" value="ALT_SEQ"/>
    <property type="molecule type" value="Genomic_DNA"/>
</dbReference>
<dbReference type="EMBL" id="AF435014">
    <property type="protein sequence ID" value="AAL28137.1"/>
    <property type="status" value="ALT_SEQ"/>
    <property type="molecule type" value="Genomic_DNA"/>
</dbReference>
<dbReference type="KEGG" id="vg:9086550"/>
<dbReference type="KEGG" id="vg:9086553"/>
<dbReference type="OrthoDB" id="27134at10239"/>
<dbReference type="Proteomes" id="UP000008258">
    <property type="component" value="Genome"/>
</dbReference>
<dbReference type="InterPro" id="IPR008474">
    <property type="entry name" value="DUF755"/>
</dbReference>
<dbReference type="InterPro" id="IPR004118">
    <property type="entry name" value="HEV_TT_vir_Orf2/Gyrovir_Vp2_N"/>
</dbReference>
<dbReference type="Pfam" id="PF05501">
    <property type="entry name" value="DUF755"/>
    <property type="match status" value="1"/>
</dbReference>
<dbReference type="Pfam" id="PF02957">
    <property type="entry name" value="TT_ORF2-like"/>
    <property type="match status" value="1"/>
</dbReference>
<name>ORF23_TTVV4</name>
<comment type="PTM">
    <text evidence="1">Phosphorylated at C-terminal serines.</text>
</comment>
<protein>
    <recommendedName>
        <fullName>Probable protein VP2</fullName>
    </recommendedName>
    <alternativeName>
        <fullName>ORF2/3 protein</fullName>
    </alternativeName>
</protein>
<proteinExistence type="inferred from homology"/>
<keyword id="KW-0597">Phosphoprotein</keyword>
<keyword id="KW-1185">Reference proteome</keyword>
<sequence length="265" mass="28854">MSWRPPAHNAEGQEGLWYRSVCQSHGAFCGCGDFVGHLNRLAERLGRPQPPRPPGGPPGPAIRVLPALPPAEGSPRRHNRTENQPCGGGDADFGDQRDAGDGGAAADDLSPADVEDLLDWLDAPDRLSKTPVNNPPLTSPVPVESLVQYKLSTRSTSTRASRSTDGTSDVASLGRQLLKECKQNQQMLSFLQQVQNAQEQRSPWPLQETPYLPGRENAKPGKTRPRKKPRAKQKPKKRRRYRSSSNSSSKSNDSSDAESSTCSSN</sequence>
<organismHost>
    <name type="scientific">Homo sapiens</name>
    <name type="common">Human</name>
    <dbReference type="NCBI Taxonomy" id="9606"/>
</organismHost>